<evidence type="ECO:0000250" key="1"/>
<evidence type="ECO:0000255" key="2"/>
<evidence type="ECO:0000255" key="3">
    <source>
        <dbReference type="PROSITE-ProRule" id="PRU01191"/>
    </source>
</evidence>
<evidence type="ECO:0000256" key="4">
    <source>
        <dbReference type="SAM" id="MobiDB-lite"/>
    </source>
</evidence>
<evidence type="ECO:0000269" key="5">
    <source>
    </source>
</evidence>
<evidence type="ECO:0000305" key="6"/>
<organism>
    <name type="scientific">Pisum sativum</name>
    <name type="common">Garden pea</name>
    <name type="synonym">Lathyrus oleraceus</name>
    <dbReference type="NCBI Taxonomy" id="3888"/>
    <lineage>
        <taxon>Eukaryota</taxon>
        <taxon>Viridiplantae</taxon>
        <taxon>Streptophyta</taxon>
        <taxon>Embryophyta</taxon>
        <taxon>Tracheophyta</taxon>
        <taxon>Spermatophyta</taxon>
        <taxon>Magnoliopsida</taxon>
        <taxon>eudicotyledons</taxon>
        <taxon>Gunneridae</taxon>
        <taxon>Pentapetalae</taxon>
        <taxon>rosids</taxon>
        <taxon>fabids</taxon>
        <taxon>Fabales</taxon>
        <taxon>Fabaceae</taxon>
        <taxon>Papilionoideae</taxon>
        <taxon>50 kb inversion clade</taxon>
        <taxon>NPAAA clade</taxon>
        <taxon>Hologalegina</taxon>
        <taxon>IRL clade</taxon>
        <taxon>Fabeae</taxon>
        <taxon>Pisum</taxon>
    </lineage>
</organism>
<dbReference type="EMBL" id="AB048713">
    <property type="protein sequence ID" value="BAB39155.1"/>
    <property type="molecule type" value="mRNA"/>
</dbReference>
<dbReference type="EMBL" id="AB048714">
    <property type="protein sequence ID" value="BAB39156.1"/>
    <property type="molecule type" value="Genomic_DNA"/>
</dbReference>
<dbReference type="SMR" id="Q9AVK4"/>
<dbReference type="OrthoDB" id="757063at2759"/>
<dbReference type="GO" id="GO:0005634">
    <property type="term" value="C:nucleus"/>
    <property type="evidence" value="ECO:0007669"/>
    <property type="project" value="UniProtKB-SubCell"/>
</dbReference>
<dbReference type="GO" id="GO:0009610">
    <property type="term" value="P:response to symbiotic fungus"/>
    <property type="evidence" value="ECO:0007669"/>
    <property type="project" value="UniProtKB-ARBA"/>
</dbReference>
<dbReference type="InterPro" id="IPR005202">
    <property type="entry name" value="TF_GRAS"/>
</dbReference>
<dbReference type="PANTHER" id="PTHR31636">
    <property type="entry name" value="OSJNBA0084A10.13 PROTEIN-RELATED"/>
    <property type="match status" value="1"/>
</dbReference>
<dbReference type="Pfam" id="PF03514">
    <property type="entry name" value="GRAS"/>
    <property type="match status" value="1"/>
</dbReference>
<dbReference type="PROSITE" id="PS50985">
    <property type="entry name" value="GRAS"/>
    <property type="match status" value="1"/>
</dbReference>
<comment type="function">
    <text evidence="1">Putative transcription factor involved in asymmetric cell division.</text>
</comment>
<comment type="subcellular location">
    <subcellularLocation>
        <location evidence="1">Nucleus</location>
    </subcellularLocation>
</comment>
<comment type="tissue specificity">
    <text evidence="5">Expressed in shoot apical meristem, leaf primordia, between the cortex and the differentiating vessels in lower shoots and in root endodermis.</text>
</comment>
<comment type="similarity">
    <text evidence="6">Belongs to the GRAS family.</text>
</comment>
<sequence length="819" mass="90372">MAACALFNGVGGGNTTPDETNNNSTSNSSNISTEDFHNMPQQQPHHSERKLLRKRMASEMELQLHNNNNNNDYHRFSRRTNNTSSLNCSLPATTQKGVTTTTTTTLASSGNNNNNNNNNNNYHYHNNNNNSIINNNNNNVALSRDNVAIQNFPTVTVTTNYSTMLLPSSCSSNLNNSSTSAANYTHYQQPLVEEQNTLPEICGFSGLPLFPSQNNQTNRTNNNSSNNRNNTNTVVDVVSSSPSMEETSATTNWIDGILKDLIHTSNSVSIPQLINNVREIIYPCNPNLALVLEHRLRLLTEPNTCVPERKRNSTEQSGVNVNGNVLAASNVNNSSVKLMNRVDDVVPTSLHFSDSSTLLNQNQNQNMFPNWGATQINNNNNPSVSLVTLPSQPLSTQQDQQHQLQQHPEDLAPATTTTTTSAELALARKKKEEIKEQKKKDEEGLHLLTLLLQCAEAVSAENLEQANKMLLEISQLSTPFGTSAQRVAAYFSEAISARLVSSCLGIYATLPVSSHTPHNQKVASAFQVFNGISPFVKFSHFTANQAIQEAFEREERVHIIDLDIMQGLQWPGLFHILASRPGGPPYVRLTGLGTSMETLEATGKRLSDFANKLGLPFEFFPVAEKVGNIDVEKLNVSKSEAVAVHWLQHSLYDVTGSDTNTLWLLQRLAPKVVTVVEQDLSNAGSFLGRFVEAIHYYSALFDSLGSSYGEESEERHVVEQQLLSREIRNVLAVGGPSRSGEIKFHNWREKLQQCGFRGVSLAGNAATQASLLLGMFPSEGYTLVEDNGILKLGWKDLCLLTASAWRPPYHTNTIIPHHN</sequence>
<proteinExistence type="evidence at transcript level"/>
<name>SCR_PEA</name>
<protein>
    <recommendedName>
        <fullName>Protein SCARECROW</fullName>
    </recommendedName>
    <alternativeName>
        <fullName>PsSCR</fullName>
    </alternativeName>
</protein>
<gene>
    <name type="primary">SCR</name>
</gene>
<accession>Q9AVK4</accession>
<accession>Q9AVK3</accession>
<reference key="1">
    <citation type="journal article" date="2001" name="Plant Cell Physiol.">
        <title>The molecular characterization and in situ expression pattern of pea SCARECROW gene.</title>
        <authorList>
            <person name="Sassa N."/>
            <person name="Matsushita Y."/>
            <person name="Nakamura T."/>
            <person name="Nyunoya H."/>
        </authorList>
    </citation>
    <scope>NUCLEOTIDE SEQUENCE [GENOMIC DNA / MRNA]</scope>
    <scope>TISSUE SPECIFICITY</scope>
    <source>
        <strain>cv. Alaska</strain>
    </source>
</reference>
<keyword id="KW-0175">Coiled coil</keyword>
<keyword id="KW-0217">Developmental protein</keyword>
<keyword id="KW-0539">Nucleus</keyword>
<keyword id="KW-0804">Transcription</keyword>
<keyword id="KW-0805">Transcription regulation</keyword>
<feature type="chain" id="PRO_0000329421" description="Protein SCARECROW">
    <location>
        <begin position="1"/>
        <end position="819"/>
    </location>
</feature>
<feature type="domain" description="GRAS" evidence="3">
    <location>
        <begin position="438"/>
        <end position="806"/>
    </location>
</feature>
<feature type="region of interest" description="Disordered" evidence="4">
    <location>
        <begin position="6"/>
        <end position="49"/>
    </location>
</feature>
<feature type="region of interest" description="Disordered" evidence="4">
    <location>
        <begin position="65"/>
        <end position="136"/>
    </location>
</feature>
<feature type="region of interest" description="Disordered" evidence="4">
    <location>
        <begin position="212"/>
        <end position="231"/>
    </location>
</feature>
<feature type="region of interest" description="Disordered" evidence="4">
    <location>
        <begin position="393"/>
        <end position="420"/>
    </location>
</feature>
<feature type="region of interest" description="Leucine repeat I (LRI)" evidence="3">
    <location>
        <begin position="445"/>
        <end position="507"/>
    </location>
</feature>
<feature type="region of interest" description="VHIID" evidence="3">
    <location>
        <begin position="526"/>
        <end position="591"/>
    </location>
</feature>
<feature type="region of interest" description="Leucine repeat II (LRII)" evidence="3">
    <location>
        <begin position="601"/>
        <end position="633"/>
    </location>
</feature>
<feature type="region of interest" description="PFYRE" evidence="3">
    <location>
        <begin position="642"/>
        <end position="729"/>
    </location>
</feature>
<feature type="region of interest" description="SAW" evidence="3">
    <location>
        <begin position="732"/>
        <end position="806"/>
    </location>
</feature>
<feature type="coiled-coil region" evidence="2">
    <location>
        <begin position="418"/>
        <end position="448"/>
    </location>
</feature>
<feature type="short sequence motif" description="LxCxE motif" evidence="3">
    <location>
        <begin position="452"/>
        <end position="456"/>
    </location>
</feature>
<feature type="short sequence motif" description="VHIID" evidence="3">
    <location>
        <begin position="557"/>
        <end position="561"/>
    </location>
</feature>
<feature type="compositionally biased region" description="Low complexity" evidence="4">
    <location>
        <begin position="15"/>
        <end position="33"/>
    </location>
</feature>
<feature type="compositionally biased region" description="Polar residues" evidence="4">
    <location>
        <begin position="79"/>
        <end position="98"/>
    </location>
</feature>
<feature type="compositionally biased region" description="Low complexity" evidence="4">
    <location>
        <begin position="99"/>
        <end position="136"/>
    </location>
</feature>